<name>YO331_YEAST</name>
<keyword id="KW-0472">Membrane</keyword>
<keyword id="KW-0812">Transmembrane</keyword>
<keyword id="KW-1133">Transmembrane helix</keyword>
<accession>Q08786</accession>
<comment type="subcellular location">
    <subcellularLocation>
        <location>Membrane</location>
        <topology>Multi-pass membrane protein</topology>
    </subcellularLocation>
</comment>
<comment type="miscellaneous">
    <text evidence="2">Almost completely overlaps VMA4.</text>
</comment>
<comment type="caution">
    <text evidence="3">Product of a dubious gene prediction unlikely to encode a functional protein. Because of that it is not part of the S.cerevisiae S288c complete/reference proteome set.</text>
</comment>
<sequence length="185" mass="20500">MSSFIDSIKSTSLSRALTIALGSNNFKSASTINDCKMGLYSSRLLAIPDNFSLVSSNIPSSDCSRAERTFNLILFAIVDLVICCESMAFFNLLLKLPSMLLVSFLTMLVFSISYSWSAFNWISFAFSSASFLMKACILFNSSFTWFGVKAVIAEDMLYRMVRGLFCASFVKQLQTTFLATAIVLC</sequence>
<dbReference type="EMBL" id="Z75239">
    <property type="protein sequence ID" value="CAA99653.1"/>
    <property type="molecule type" value="Genomic_DNA"/>
</dbReference>
<dbReference type="EMBL" id="AY693355">
    <property type="protein sequence ID" value="AAT93374.1"/>
    <property type="molecule type" value="Genomic_DNA"/>
</dbReference>
<dbReference type="PIR" id="S67238">
    <property type="entry name" value="S67238"/>
</dbReference>
<dbReference type="DIP" id="DIP-2016N"/>
<dbReference type="IntAct" id="Q08786">
    <property type="interactions" value="1"/>
</dbReference>
<dbReference type="MINT" id="Q08786"/>
<dbReference type="STRING" id="4932.YOR331C"/>
<dbReference type="PaxDb" id="4932-YOR331C"/>
<dbReference type="EnsemblFungi" id="YOR331C_mRNA">
    <property type="protein sequence ID" value="YOR331C"/>
    <property type="gene ID" value="YOR331C"/>
</dbReference>
<dbReference type="AGR" id="SGD:S000005858"/>
<dbReference type="SGD" id="S000005858">
    <property type="gene designation" value="YOR331C"/>
</dbReference>
<dbReference type="HOGENOM" id="CLU_1462434_0_0_1"/>
<dbReference type="GO" id="GO:0016020">
    <property type="term" value="C:membrane"/>
    <property type="evidence" value="ECO:0007669"/>
    <property type="project" value="UniProtKB-SubCell"/>
</dbReference>
<organism>
    <name type="scientific">Saccharomyces cerevisiae (strain ATCC 204508 / S288c)</name>
    <name type="common">Baker's yeast</name>
    <dbReference type="NCBI Taxonomy" id="559292"/>
    <lineage>
        <taxon>Eukaryota</taxon>
        <taxon>Fungi</taxon>
        <taxon>Dikarya</taxon>
        <taxon>Ascomycota</taxon>
        <taxon>Saccharomycotina</taxon>
        <taxon>Saccharomycetes</taxon>
        <taxon>Saccharomycetales</taxon>
        <taxon>Saccharomycetaceae</taxon>
        <taxon>Saccharomyces</taxon>
    </lineage>
</organism>
<proteinExistence type="uncertain"/>
<protein>
    <recommendedName>
        <fullName>Putative uncharacterized membrane protein YOR331C</fullName>
    </recommendedName>
</protein>
<reference key="1">
    <citation type="journal article" date="1997" name="Nature">
        <title>The nucleotide sequence of Saccharomyces cerevisiae chromosome XV.</title>
        <authorList>
            <person name="Dujon B."/>
            <person name="Albermann K."/>
            <person name="Aldea M."/>
            <person name="Alexandraki D."/>
            <person name="Ansorge W."/>
            <person name="Arino J."/>
            <person name="Benes V."/>
            <person name="Bohn C."/>
            <person name="Bolotin-Fukuhara M."/>
            <person name="Bordonne R."/>
            <person name="Boyer J."/>
            <person name="Camasses A."/>
            <person name="Casamayor A."/>
            <person name="Casas C."/>
            <person name="Cheret G."/>
            <person name="Cziepluch C."/>
            <person name="Daignan-Fornier B."/>
            <person name="Dang V.-D."/>
            <person name="de Haan M."/>
            <person name="Delius H."/>
            <person name="Durand P."/>
            <person name="Fairhead C."/>
            <person name="Feldmann H."/>
            <person name="Gaillon L."/>
            <person name="Galisson F."/>
            <person name="Gamo F.-J."/>
            <person name="Gancedo C."/>
            <person name="Goffeau A."/>
            <person name="Goulding S.E."/>
            <person name="Grivell L.A."/>
            <person name="Habbig B."/>
            <person name="Hand N.J."/>
            <person name="Hani J."/>
            <person name="Hattenhorst U."/>
            <person name="Hebling U."/>
            <person name="Hernando Y."/>
            <person name="Herrero E."/>
            <person name="Heumann K."/>
            <person name="Hiesel R."/>
            <person name="Hilger F."/>
            <person name="Hofmann B."/>
            <person name="Hollenberg C.P."/>
            <person name="Hughes B."/>
            <person name="Jauniaux J.-C."/>
            <person name="Kalogeropoulos A."/>
            <person name="Katsoulou C."/>
            <person name="Kordes E."/>
            <person name="Lafuente M.J."/>
            <person name="Landt O."/>
            <person name="Louis E.J."/>
            <person name="Maarse A.C."/>
            <person name="Madania A."/>
            <person name="Mannhaupt G."/>
            <person name="Marck C."/>
            <person name="Martin R.P."/>
            <person name="Mewes H.-W."/>
            <person name="Michaux G."/>
            <person name="Paces V."/>
            <person name="Parle-McDermott A.G."/>
            <person name="Pearson B.M."/>
            <person name="Perrin A."/>
            <person name="Pettersson B."/>
            <person name="Poch O."/>
            <person name="Pohl T.M."/>
            <person name="Poirey R."/>
            <person name="Portetelle D."/>
            <person name="Pujol A."/>
            <person name="Purnelle B."/>
            <person name="Ramezani Rad M."/>
            <person name="Rechmann S."/>
            <person name="Schwager C."/>
            <person name="Schweizer M."/>
            <person name="Sor F."/>
            <person name="Sterky F."/>
            <person name="Tarassov I.A."/>
            <person name="Teodoru C."/>
            <person name="Tettelin H."/>
            <person name="Thierry A."/>
            <person name="Tobiasch E."/>
            <person name="Tzermia M."/>
            <person name="Uhlen M."/>
            <person name="Unseld M."/>
            <person name="Valens M."/>
            <person name="Vandenbol M."/>
            <person name="Vetter I."/>
            <person name="Vlcek C."/>
            <person name="Voet M."/>
            <person name="Volckaert G."/>
            <person name="Voss H."/>
            <person name="Wambutt R."/>
            <person name="Wedler H."/>
            <person name="Wiemann S."/>
            <person name="Winsor B."/>
            <person name="Wolfe K.H."/>
            <person name="Zollner A."/>
            <person name="Zumstein E."/>
            <person name="Kleine K."/>
        </authorList>
    </citation>
    <scope>NUCLEOTIDE SEQUENCE [LARGE SCALE GENOMIC DNA]</scope>
    <source>
        <strain>ATCC 204508 / S288c</strain>
    </source>
</reference>
<reference key="2">
    <citation type="journal article" date="2014" name="G3 (Bethesda)">
        <title>The reference genome sequence of Saccharomyces cerevisiae: Then and now.</title>
        <authorList>
            <person name="Engel S.R."/>
            <person name="Dietrich F.S."/>
            <person name="Fisk D.G."/>
            <person name="Binkley G."/>
            <person name="Balakrishnan R."/>
            <person name="Costanzo M.C."/>
            <person name="Dwight S.S."/>
            <person name="Hitz B.C."/>
            <person name="Karra K."/>
            <person name="Nash R.S."/>
            <person name="Weng S."/>
            <person name="Wong E.D."/>
            <person name="Lloyd P."/>
            <person name="Skrzypek M.S."/>
            <person name="Miyasato S.R."/>
            <person name="Simison M."/>
            <person name="Cherry J.M."/>
        </authorList>
    </citation>
    <scope>GENOME REANNOTATION</scope>
    <source>
        <strain>ATCC 204508 / S288c</strain>
    </source>
</reference>
<reference key="3">
    <citation type="journal article" date="2007" name="Genome Res.">
        <title>Approaching a complete repository of sequence-verified protein-encoding clones for Saccharomyces cerevisiae.</title>
        <authorList>
            <person name="Hu Y."/>
            <person name="Rolfs A."/>
            <person name="Bhullar B."/>
            <person name="Murthy T.V.S."/>
            <person name="Zhu C."/>
            <person name="Berger M.F."/>
            <person name="Camargo A.A."/>
            <person name="Kelley F."/>
            <person name="McCarron S."/>
            <person name="Jepson D."/>
            <person name="Richardson A."/>
            <person name="Raphael J."/>
            <person name="Moreira D."/>
            <person name="Taycher E."/>
            <person name="Zuo D."/>
            <person name="Mohr S."/>
            <person name="Kane M.F."/>
            <person name="Williamson J."/>
            <person name="Simpson A.J.G."/>
            <person name="Bulyk M.L."/>
            <person name="Harlow E."/>
            <person name="Marsischky G."/>
            <person name="Kolodner R.D."/>
            <person name="LaBaer J."/>
        </authorList>
    </citation>
    <scope>NUCLEOTIDE SEQUENCE [GENOMIC DNA]</scope>
    <source>
        <strain>ATCC 204508 / S288c</strain>
    </source>
</reference>
<reference key="4">
    <citation type="journal article" date="2006" name="Proc. Natl. Acad. Sci. U.S.A.">
        <title>A global topology map of the Saccharomyces cerevisiae membrane proteome.</title>
        <authorList>
            <person name="Kim H."/>
            <person name="Melen K."/>
            <person name="Oesterberg M."/>
            <person name="von Heijne G."/>
        </authorList>
    </citation>
    <scope>TOPOLOGY [LARGE SCALE ANALYSIS]</scope>
    <source>
        <strain>ATCC 208353 / W303-1A</strain>
    </source>
</reference>
<evidence type="ECO:0000255" key="1"/>
<evidence type="ECO:0000305" key="2"/>
<evidence type="ECO:0000305" key="3">
    <source>
    </source>
</evidence>
<feature type="chain" id="PRO_0000262744" description="Putative uncharacterized membrane protein YOR331C">
    <location>
        <begin position="1"/>
        <end position="185"/>
    </location>
</feature>
<feature type="topological domain" description="Cytoplasmic" evidence="1">
    <location>
        <begin position="1"/>
        <end position="69"/>
    </location>
</feature>
<feature type="transmembrane region" description="Helical" evidence="1">
    <location>
        <begin position="70"/>
        <end position="90"/>
    </location>
</feature>
<feature type="topological domain" description="Extracellular" evidence="1">
    <location>
        <position position="91"/>
    </location>
</feature>
<feature type="transmembrane region" description="Helical" evidence="1">
    <location>
        <begin position="92"/>
        <end position="112"/>
    </location>
</feature>
<feature type="topological domain" description="Cytoplasmic" evidence="1">
    <location>
        <begin position="113"/>
        <end position="118"/>
    </location>
</feature>
<feature type="transmembrane region" description="Helical" evidence="1">
    <location>
        <begin position="119"/>
        <end position="139"/>
    </location>
</feature>
<feature type="topological domain" description="Extracellular" evidence="1">
    <location>
        <begin position="140"/>
        <end position="185"/>
    </location>
</feature>
<gene>
    <name type="ordered locus">YOR331C</name>
    <name type="ORF">O6238</name>
</gene>